<keyword id="KW-0472">Membrane</keyword>
<keyword id="KW-0496">Mitochondrion</keyword>
<keyword id="KW-0999">Mitochondrion inner membrane</keyword>
<keyword id="KW-0809">Transit peptide</keyword>
<organism>
    <name type="scientific">Candida albicans (strain WO-1)</name>
    <name type="common">Yeast</name>
    <dbReference type="NCBI Taxonomy" id="294748"/>
    <lineage>
        <taxon>Eukaryota</taxon>
        <taxon>Fungi</taxon>
        <taxon>Dikarya</taxon>
        <taxon>Ascomycota</taxon>
        <taxon>Saccharomycotina</taxon>
        <taxon>Pichiomycetes</taxon>
        <taxon>Debaryomycetaceae</taxon>
        <taxon>Candida/Lodderomyces clade</taxon>
        <taxon>Candida</taxon>
    </lineage>
</organism>
<reference key="1">
    <citation type="journal article" date="2009" name="Nature">
        <title>Evolution of pathogenicity and sexual reproduction in eight Candida genomes.</title>
        <authorList>
            <person name="Butler G."/>
            <person name="Rasmussen M.D."/>
            <person name="Lin M.F."/>
            <person name="Santos M.A.S."/>
            <person name="Sakthikumar S."/>
            <person name="Munro C.A."/>
            <person name="Rheinbay E."/>
            <person name="Grabherr M."/>
            <person name="Forche A."/>
            <person name="Reedy J.L."/>
            <person name="Agrafioti I."/>
            <person name="Arnaud M.B."/>
            <person name="Bates S."/>
            <person name="Brown A.J.P."/>
            <person name="Brunke S."/>
            <person name="Costanzo M.C."/>
            <person name="Fitzpatrick D.A."/>
            <person name="de Groot P.W.J."/>
            <person name="Harris D."/>
            <person name="Hoyer L.L."/>
            <person name="Hube B."/>
            <person name="Klis F.M."/>
            <person name="Kodira C."/>
            <person name="Lennard N."/>
            <person name="Logue M.E."/>
            <person name="Martin R."/>
            <person name="Neiman A.M."/>
            <person name="Nikolaou E."/>
            <person name="Quail M.A."/>
            <person name="Quinn J."/>
            <person name="Santos M.C."/>
            <person name="Schmitzberger F.F."/>
            <person name="Sherlock G."/>
            <person name="Shah P."/>
            <person name="Silverstein K.A.T."/>
            <person name="Skrzypek M.S."/>
            <person name="Soll D."/>
            <person name="Staggs R."/>
            <person name="Stansfield I."/>
            <person name="Stumpf M.P.H."/>
            <person name="Sudbery P.E."/>
            <person name="Srikantha T."/>
            <person name="Zeng Q."/>
            <person name="Berman J."/>
            <person name="Berriman M."/>
            <person name="Heitman J."/>
            <person name="Gow N.A.R."/>
            <person name="Lorenz M.C."/>
            <person name="Birren B.W."/>
            <person name="Kellis M."/>
            <person name="Cuomo C.A."/>
        </authorList>
    </citation>
    <scope>NUCLEOTIDE SEQUENCE [LARGE SCALE GENOMIC DNA]</scope>
    <source>
        <strain>WO-1</strain>
    </source>
</reference>
<sequence>MIVRGKCLGRSVSKAVSLFSRPISVISAKSFATTTNLLQNSKDDSTEATIPWYMREENSSPVEVLNKIEVPELPENSPQSLQEFVTLLTVEYGLTDLEIFDLSQLPEDHPKSLEEQNEENYVILASGKSEKHIYKAAYELRLYIKHTYKHLPIIEGMSSNSISKVTRRRLAKRVRRGPPATASTFGIGANSWVSCGTGVDGIVIHLLSRERRESLNLEQLYSDEQENEESHSTPEIDQNRLFFGDRRGFHTSSRNFNLNTLSNIYDSYVIDGNFDTSQKFKAQFDLNFKGGSVEEHNKKFELYRAINLVNANVVEANEIEQIIWDKYSSLDLALQQEIDWNTEIIKDTIKYMEFLVDLNARHSPREKLDKLSGFISNITCFAGDSIDLFTIDKFGALLWRLTWVSENNNALDSANLNEIIKRKGDFEPGTNTISFDNELGRNIRELLRQNKYSSNKETFPLWLREQMMYTFGQAGLWDRFWRDWQSILQSLNKTNERIYFWVVTALFLSKVDNRDALRHLFTKYWSNPSGASFVADYTTNNHQFNSDNERMALKNVLVQIGEKYNTSPWAREAAQFADNL</sequence>
<dbReference type="EMBL" id="CM000309">
    <property type="protein sequence ID" value="EEQ43433.1"/>
    <property type="molecule type" value="Genomic_DNA"/>
</dbReference>
<dbReference type="SMR" id="C4YLF2"/>
<dbReference type="PaxDb" id="5476-C4YLF2"/>
<dbReference type="VEuPathDB" id="FungiDB:CAWG_01670"/>
<dbReference type="HOGENOM" id="CLU_454918_0_0_1"/>
<dbReference type="OMA" id="WLREQMM"/>
<dbReference type="OrthoDB" id="22018at766764"/>
<dbReference type="Proteomes" id="UP000001429">
    <property type="component" value="Chromosome R"/>
</dbReference>
<dbReference type="GO" id="GO:0005743">
    <property type="term" value="C:mitochondrial inner membrane"/>
    <property type="evidence" value="ECO:0007669"/>
    <property type="project" value="UniProtKB-SubCell"/>
</dbReference>
<dbReference type="GO" id="GO:0140053">
    <property type="term" value="P:mitochondrial gene expression"/>
    <property type="evidence" value="ECO:0007669"/>
    <property type="project" value="InterPro"/>
</dbReference>
<dbReference type="GO" id="GO:0048255">
    <property type="term" value="P:mRNA stabilization"/>
    <property type="evidence" value="ECO:0007669"/>
    <property type="project" value="TreeGrafter"/>
</dbReference>
<dbReference type="Gene3D" id="3.30.460.10">
    <property type="entry name" value="Beta Polymerase, domain 2"/>
    <property type="match status" value="1"/>
</dbReference>
<dbReference type="InterPro" id="IPR040152">
    <property type="entry name" value="Atp25"/>
</dbReference>
<dbReference type="InterPro" id="IPR043519">
    <property type="entry name" value="NT_sf"/>
</dbReference>
<dbReference type="PANTHER" id="PTHR28087">
    <property type="entry name" value="ATPASE SYNTHESIS PROTEIN 25, MITOCHONDRIAL"/>
    <property type="match status" value="1"/>
</dbReference>
<dbReference type="PANTHER" id="PTHR28087:SF1">
    <property type="entry name" value="ATPASE SYNTHESIS PROTEIN 25, MITOCHONDRIAL"/>
    <property type="match status" value="1"/>
</dbReference>
<dbReference type="Pfam" id="PF02410">
    <property type="entry name" value="RsfS"/>
    <property type="match status" value="1"/>
</dbReference>
<dbReference type="SUPFAM" id="SSF81301">
    <property type="entry name" value="Nucleotidyltransferase"/>
    <property type="match status" value="1"/>
</dbReference>
<protein>
    <recommendedName>
        <fullName>ATPase synthesis protein 25, mitochondrial</fullName>
    </recommendedName>
</protein>
<gene>
    <name type="primary">ATP25</name>
    <name type="ORF">CAWG_01670</name>
</gene>
<accession>C4YLF2</accession>
<name>ATP25_CANAW</name>
<feature type="transit peptide" description="Mitochondrion" evidence="2">
    <location>
        <begin position="1"/>
        <end position="38"/>
    </location>
</feature>
<feature type="chain" id="PRO_0000404464" description="ATPase synthesis protein 25, mitochondrial">
    <location>
        <begin position="39"/>
        <end position="580"/>
    </location>
</feature>
<proteinExistence type="inferred from homology"/>
<evidence type="ECO:0000250" key="1"/>
<evidence type="ECO:0000255" key="2"/>
<evidence type="ECO:0000305" key="3"/>
<comment type="function">
    <text evidence="1">Probable mitochondrial mRNA stabilization factor.</text>
</comment>
<comment type="subcellular location">
    <subcellularLocation>
        <location evidence="1">Mitochondrion inner membrane</location>
        <topology evidence="1">Peripheral membrane protein</topology>
        <orientation evidence="1">Matrix side</orientation>
    </subcellularLocation>
</comment>
<comment type="similarity">
    <text evidence="3">Belongs to the ATP25 family.</text>
</comment>